<name>S5A1_BOVIN</name>
<protein>
    <recommendedName>
        <fullName>3-oxo-5-alpha-steroid 4-dehydrogenase 1</fullName>
        <ecNumber evidence="2">1.3.1.22</ecNumber>
    </recommendedName>
    <alternativeName>
        <fullName>SR type 1</fullName>
    </alternativeName>
    <alternativeName>
        <fullName>Steroid 5-alpha-reductase 1</fullName>
        <shortName>S5AR 1</shortName>
    </alternativeName>
</protein>
<organism>
    <name type="scientific">Bos taurus</name>
    <name type="common">Bovine</name>
    <dbReference type="NCBI Taxonomy" id="9913"/>
    <lineage>
        <taxon>Eukaryota</taxon>
        <taxon>Metazoa</taxon>
        <taxon>Chordata</taxon>
        <taxon>Craniata</taxon>
        <taxon>Vertebrata</taxon>
        <taxon>Euteleostomi</taxon>
        <taxon>Mammalia</taxon>
        <taxon>Eutheria</taxon>
        <taxon>Laurasiatheria</taxon>
        <taxon>Artiodactyla</taxon>
        <taxon>Ruminantia</taxon>
        <taxon>Pecora</taxon>
        <taxon>Bovidae</taxon>
        <taxon>Bovinae</taxon>
        <taxon>Bos</taxon>
    </lineage>
</organism>
<comment type="function">
    <text evidence="3">Converts testosterone into 5-alpha-dihydrotestosterone and progesterone or corticosterone into their corresponding 5-alpha-3-oxosteroids. It plays a central role in sexual differentiation and androgen physiology.</text>
</comment>
<comment type="catalytic activity">
    <reaction evidence="3">
        <text>a 3-oxo-5alpha-steroid + NADP(+) = a 3-oxo-Delta(4)-steroid + NADPH + H(+)</text>
        <dbReference type="Rhea" id="RHEA:54384"/>
        <dbReference type="ChEBI" id="CHEBI:13601"/>
        <dbReference type="ChEBI" id="CHEBI:15378"/>
        <dbReference type="ChEBI" id="CHEBI:47909"/>
        <dbReference type="ChEBI" id="CHEBI:57783"/>
        <dbReference type="ChEBI" id="CHEBI:58349"/>
        <dbReference type="EC" id="1.3.1.22"/>
    </reaction>
    <physiologicalReaction direction="right-to-left" evidence="3">
        <dbReference type="Rhea" id="RHEA:54386"/>
    </physiologicalReaction>
</comment>
<comment type="catalytic activity">
    <reaction evidence="3">
        <text>5alpha-pregnane-3,20-dione + NADP(+) = progesterone + NADPH + H(+)</text>
        <dbReference type="Rhea" id="RHEA:21952"/>
        <dbReference type="ChEBI" id="CHEBI:15378"/>
        <dbReference type="ChEBI" id="CHEBI:17026"/>
        <dbReference type="ChEBI" id="CHEBI:28952"/>
        <dbReference type="ChEBI" id="CHEBI:57783"/>
        <dbReference type="ChEBI" id="CHEBI:58349"/>
        <dbReference type="EC" id="1.3.1.22"/>
    </reaction>
    <physiologicalReaction direction="right-to-left" evidence="3">
        <dbReference type="Rhea" id="RHEA:21954"/>
    </physiologicalReaction>
</comment>
<comment type="catalytic activity">
    <reaction evidence="3">
        <text>17beta-hydroxy-5alpha-androstan-3-one + NADP(+) = testosterone + NADPH + H(+)</text>
        <dbReference type="Rhea" id="RHEA:50820"/>
        <dbReference type="ChEBI" id="CHEBI:15378"/>
        <dbReference type="ChEBI" id="CHEBI:16330"/>
        <dbReference type="ChEBI" id="CHEBI:17347"/>
        <dbReference type="ChEBI" id="CHEBI:57783"/>
        <dbReference type="ChEBI" id="CHEBI:58349"/>
        <dbReference type="EC" id="1.3.1.22"/>
    </reaction>
    <physiologicalReaction direction="right-to-left" evidence="3">
        <dbReference type="Rhea" id="RHEA:50822"/>
    </physiologicalReaction>
</comment>
<comment type="catalytic activity">
    <reaction evidence="3">
        <text>androst-4-ene-3,17-dione + NADPH + H(+) = 5alpha-androstan-3,17-dione + NADP(+)</text>
        <dbReference type="Rhea" id="RHEA:50816"/>
        <dbReference type="ChEBI" id="CHEBI:15378"/>
        <dbReference type="ChEBI" id="CHEBI:15994"/>
        <dbReference type="ChEBI" id="CHEBI:16422"/>
        <dbReference type="ChEBI" id="CHEBI:57783"/>
        <dbReference type="ChEBI" id="CHEBI:58349"/>
    </reaction>
    <physiologicalReaction direction="left-to-right" evidence="3">
        <dbReference type="Rhea" id="RHEA:50817"/>
    </physiologicalReaction>
</comment>
<comment type="subcellular location">
    <subcellularLocation>
        <location evidence="1">Microsome membrane</location>
        <topology evidence="1">Multi-pass membrane protein</topology>
    </subcellularLocation>
    <subcellularLocation>
        <location evidence="5">Endoplasmic reticulum membrane</location>
        <topology evidence="5">Multi-pass membrane protein</topology>
    </subcellularLocation>
</comment>
<comment type="similarity">
    <text evidence="5">Belongs to the steroid 5-alpha reductase family.</text>
</comment>
<accession>A5PJS2</accession>
<reference key="1">
    <citation type="submission" date="2007-06" db="EMBL/GenBank/DDBJ databases">
        <authorList>
            <consortium name="NIH - Mammalian Gene Collection (MGC) project"/>
        </authorList>
    </citation>
    <scope>NUCLEOTIDE SEQUENCE [LARGE SCALE MRNA]</scope>
    <source>
        <strain>Hereford</strain>
        <tissue>Fetal skin</tissue>
    </source>
</reference>
<sequence length="257" mass="29186">MELAERFLLDALAYLECALGVVCYVLLKLVGSPYGRYASSGSAFGLPARAAWTVQELPSLALPLLACAGAGAPAERLNRWPNCILLAMFLVHYAQRSLVFPFLIRGGKPMPLYAFLLAFIFCTYNGYLQSRYLSQYAVYADDWLSDPRFLTGSALWLIGMLINIHSDHVLRNLRKPGETGYKIPRGGLFEYISAANYFGEVVEWCGYALASWSIQGWAFAVFTFCVLFTRAQQHHKWYHEKFEDYPKFRKIMIPFLV</sequence>
<evidence type="ECO:0000250" key="1"/>
<evidence type="ECO:0000250" key="2">
    <source>
        <dbReference type="UniProtKB" id="P18405"/>
    </source>
</evidence>
<evidence type="ECO:0000250" key="3">
    <source>
        <dbReference type="UniProtKB" id="P24008"/>
    </source>
</evidence>
<evidence type="ECO:0000255" key="4"/>
<evidence type="ECO:0000305" key="5"/>
<proteinExistence type="evidence at transcript level"/>
<feature type="chain" id="PRO_0000317710" description="3-oxo-5-alpha-steroid 4-dehydrogenase 1">
    <location>
        <begin position="1"/>
        <end position="257"/>
    </location>
</feature>
<feature type="transmembrane region" description="Helical" evidence="4">
    <location>
        <begin position="7"/>
        <end position="27"/>
    </location>
</feature>
<feature type="transmembrane region" description="Helical" evidence="4">
    <location>
        <begin position="50"/>
        <end position="70"/>
    </location>
</feature>
<feature type="transmembrane region" description="Helical" evidence="4">
    <location>
        <begin position="84"/>
        <end position="104"/>
    </location>
</feature>
<feature type="transmembrane region" description="Helical" evidence="4">
    <location>
        <begin position="109"/>
        <end position="129"/>
    </location>
</feature>
<feature type="transmembrane region" description="Helical" evidence="4">
    <location>
        <begin position="149"/>
        <end position="169"/>
    </location>
</feature>
<feature type="transmembrane region" description="Helical" evidence="4">
    <location>
        <begin position="208"/>
        <end position="228"/>
    </location>
</feature>
<dbReference type="EC" id="1.3.1.22" evidence="2"/>
<dbReference type="EMBL" id="BC142219">
    <property type="protein sequence ID" value="AAI42220.1"/>
    <property type="molecule type" value="mRNA"/>
</dbReference>
<dbReference type="RefSeq" id="NP_001092607.1">
    <property type="nucleotide sequence ID" value="NM_001099137.1"/>
</dbReference>
<dbReference type="RefSeq" id="XP_015314613.1">
    <property type="nucleotide sequence ID" value="XM_015459127.1"/>
</dbReference>
<dbReference type="RefSeq" id="XP_059734771.1">
    <property type="nucleotide sequence ID" value="XM_059878788.1"/>
</dbReference>
<dbReference type="SMR" id="A5PJS2"/>
<dbReference type="FunCoup" id="A5PJS2">
    <property type="interactions" value="260"/>
</dbReference>
<dbReference type="STRING" id="9913.ENSBTAP00000020570"/>
<dbReference type="PaxDb" id="9913-ENSBTAP00000020570"/>
<dbReference type="GeneID" id="614612"/>
<dbReference type="KEGG" id="bta:614612"/>
<dbReference type="CTD" id="6715"/>
<dbReference type="VEuPathDB" id="HostDB:ENSBTAG00000015478"/>
<dbReference type="eggNOG" id="KOG1638">
    <property type="taxonomic scope" value="Eukaryota"/>
</dbReference>
<dbReference type="HOGENOM" id="CLU_065395_1_1_1"/>
<dbReference type="InParanoid" id="A5PJS2"/>
<dbReference type="OMA" id="PHYALEW"/>
<dbReference type="OrthoDB" id="5788137at2759"/>
<dbReference type="TreeFam" id="TF314668"/>
<dbReference type="Reactome" id="R-BTA-193048">
    <property type="pathway name" value="Androgen biosynthesis"/>
</dbReference>
<dbReference type="Proteomes" id="UP000009136">
    <property type="component" value="Chromosome 20"/>
</dbReference>
<dbReference type="GO" id="GO:0005789">
    <property type="term" value="C:endoplasmic reticulum membrane"/>
    <property type="evidence" value="ECO:0007669"/>
    <property type="project" value="UniProtKB-SubCell"/>
</dbReference>
<dbReference type="GO" id="GO:0047751">
    <property type="term" value="F:3-oxo-5-alpha-steroid 4-dehydrogenase (NADP+) activity"/>
    <property type="evidence" value="ECO:0007669"/>
    <property type="project" value="UniProtKB-EC"/>
</dbReference>
<dbReference type="GO" id="GO:0003865">
    <property type="term" value="F:3-oxo-5-alpha-steroid 4-dehydrogenase activity"/>
    <property type="evidence" value="ECO:0000250"/>
    <property type="project" value="UniProtKB"/>
</dbReference>
<dbReference type="GO" id="GO:0006702">
    <property type="term" value="P:androgen biosynthetic process"/>
    <property type="evidence" value="ECO:0007669"/>
    <property type="project" value="UniProtKB-ARBA"/>
</dbReference>
<dbReference type="GO" id="GO:0030154">
    <property type="term" value="P:cell differentiation"/>
    <property type="evidence" value="ECO:0007669"/>
    <property type="project" value="UniProtKB-KW"/>
</dbReference>
<dbReference type="GO" id="GO:0007548">
    <property type="term" value="P:sex differentiation"/>
    <property type="evidence" value="ECO:0007669"/>
    <property type="project" value="UniProtKB-KW"/>
</dbReference>
<dbReference type="GO" id="GO:0006694">
    <property type="term" value="P:steroid biosynthetic process"/>
    <property type="evidence" value="ECO:0000318"/>
    <property type="project" value="GO_Central"/>
</dbReference>
<dbReference type="FunFam" id="1.20.120.1630:FF:000002">
    <property type="entry name" value="Steroid 5 alpha-reductase 1"/>
    <property type="match status" value="1"/>
</dbReference>
<dbReference type="Gene3D" id="1.20.120.1630">
    <property type="match status" value="1"/>
</dbReference>
<dbReference type="InterPro" id="IPR016636">
    <property type="entry name" value="3-oxo-5-alpha-steroid_4-DH"/>
</dbReference>
<dbReference type="InterPro" id="IPR001104">
    <property type="entry name" value="3-oxo-5_a-steroid_4-DH_C"/>
</dbReference>
<dbReference type="InterPro" id="IPR039357">
    <property type="entry name" value="SRD5A/TECR"/>
</dbReference>
<dbReference type="PANTHER" id="PTHR10556">
    <property type="entry name" value="3-OXO-5-ALPHA-STEROID 4-DEHYDROGENASE"/>
    <property type="match status" value="1"/>
</dbReference>
<dbReference type="PANTHER" id="PTHR10556:SF57">
    <property type="entry name" value="3-OXO-5-ALPHA-STEROID 4-DEHYDROGENASE 1"/>
    <property type="match status" value="1"/>
</dbReference>
<dbReference type="Pfam" id="PF02544">
    <property type="entry name" value="Steroid_dh"/>
    <property type="match status" value="1"/>
</dbReference>
<dbReference type="PIRSF" id="PIRSF015596">
    <property type="entry name" value="5_alpha-SR2"/>
    <property type="match status" value="1"/>
</dbReference>
<dbReference type="PROSITE" id="PS50244">
    <property type="entry name" value="S5A_REDUCTASE"/>
    <property type="match status" value="1"/>
</dbReference>
<gene>
    <name type="primary">SRD5A1</name>
</gene>
<keyword id="KW-0221">Differentiation</keyword>
<keyword id="KW-0256">Endoplasmic reticulum</keyword>
<keyword id="KW-0443">Lipid metabolism</keyword>
<keyword id="KW-0472">Membrane</keyword>
<keyword id="KW-0492">Microsome</keyword>
<keyword id="KW-0521">NADP</keyword>
<keyword id="KW-0560">Oxidoreductase</keyword>
<keyword id="KW-1185">Reference proteome</keyword>
<keyword id="KW-0726">Sexual differentiation</keyword>
<keyword id="KW-0812">Transmembrane</keyword>
<keyword id="KW-1133">Transmembrane helix</keyword>